<dbReference type="EMBL" id="CP000458">
    <property type="protein sequence ID" value="ABK07101.1"/>
    <property type="molecule type" value="Genomic_DNA"/>
</dbReference>
<dbReference type="RefSeq" id="WP_004199280.1">
    <property type="nucleotide sequence ID" value="NC_008542.1"/>
</dbReference>
<dbReference type="SMR" id="A0K3M4"/>
<dbReference type="GeneID" id="98107161"/>
<dbReference type="KEGG" id="bch:Bcen2424_0347"/>
<dbReference type="HOGENOM" id="CLU_122625_1_3_4"/>
<dbReference type="GO" id="GO:1990904">
    <property type="term" value="C:ribonucleoprotein complex"/>
    <property type="evidence" value="ECO:0007669"/>
    <property type="project" value="UniProtKB-KW"/>
</dbReference>
<dbReference type="GO" id="GO:0005840">
    <property type="term" value="C:ribosome"/>
    <property type="evidence" value="ECO:0007669"/>
    <property type="project" value="UniProtKB-KW"/>
</dbReference>
<dbReference type="GO" id="GO:0003735">
    <property type="term" value="F:structural constituent of ribosome"/>
    <property type="evidence" value="ECO:0007669"/>
    <property type="project" value="InterPro"/>
</dbReference>
<dbReference type="GO" id="GO:0000049">
    <property type="term" value="F:tRNA binding"/>
    <property type="evidence" value="ECO:0007669"/>
    <property type="project" value="UniProtKB-UniRule"/>
</dbReference>
<dbReference type="GO" id="GO:0006412">
    <property type="term" value="P:translation"/>
    <property type="evidence" value="ECO:0007669"/>
    <property type="project" value="UniProtKB-UniRule"/>
</dbReference>
<dbReference type="FunFam" id="3.30.70.600:FF:000001">
    <property type="entry name" value="30S ribosomal protein S10"/>
    <property type="match status" value="1"/>
</dbReference>
<dbReference type="Gene3D" id="3.30.70.600">
    <property type="entry name" value="Ribosomal protein S10 domain"/>
    <property type="match status" value="1"/>
</dbReference>
<dbReference type="HAMAP" id="MF_00508">
    <property type="entry name" value="Ribosomal_uS10"/>
    <property type="match status" value="1"/>
</dbReference>
<dbReference type="InterPro" id="IPR001848">
    <property type="entry name" value="Ribosomal_uS10"/>
</dbReference>
<dbReference type="InterPro" id="IPR018268">
    <property type="entry name" value="Ribosomal_uS10_CS"/>
</dbReference>
<dbReference type="InterPro" id="IPR027486">
    <property type="entry name" value="Ribosomal_uS10_dom"/>
</dbReference>
<dbReference type="InterPro" id="IPR036838">
    <property type="entry name" value="Ribosomal_uS10_dom_sf"/>
</dbReference>
<dbReference type="NCBIfam" id="NF001861">
    <property type="entry name" value="PRK00596.1"/>
    <property type="match status" value="1"/>
</dbReference>
<dbReference type="NCBIfam" id="TIGR01049">
    <property type="entry name" value="rpsJ_bact"/>
    <property type="match status" value="1"/>
</dbReference>
<dbReference type="PANTHER" id="PTHR11700">
    <property type="entry name" value="30S RIBOSOMAL PROTEIN S10 FAMILY MEMBER"/>
    <property type="match status" value="1"/>
</dbReference>
<dbReference type="Pfam" id="PF00338">
    <property type="entry name" value="Ribosomal_S10"/>
    <property type="match status" value="1"/>
</dbReference>
<dbReference type="PRINTS" id="PR00971">
    <property type="entry name" value="RIBOSOMALS10"/>
</dbReference>
<dbReference type="SMART" id="SM01403">
    <property type="entry name" value="Ribosomal_S10"/>
    <property type="match status" value="1"/>
</dbReference>
<dbReference type="SUPFAM" id="SSF54999">
    <property type="entry name" value="Ribosomal protein S10"/>
    <property type="match status" value="1"/>
</dbReference>
<dbReference type="PROSITE" id="PS00361">
    <property type="entry name" value="RIBOSOMAL_S10"/>
    <property type="match status" value="1"/>
</dbReference>
<feature type="chain" id="PRO_1000014995" description="Small ribosomal subunit protein uS10">
    <location>
        <begin position="1"/>
        <end position="103"/>
    </location>
</feature>
<evidence type="ECO:0000255" key="1">
    <source>
        <dbReference type="HAMAP-Rule" id="MF_00508"/>
    </source>
</evidence>
<evidence type="ECO:0000305" key="2"/>
<sequence length="103" mass="11828">MQQQKIRIRLKAFDYRLIDQSAAEIVDTAKRTGAIVRGPVPLPTRIQRFDILRSPHVNKTSRDQLEIRTHQRLMDIVDPTDKTVDALMKLDLPAGVDVEIKLQ</sequence>
<protein>
    <recommendedName>
        <fullName evidence="1">Small ribosomal subunit protein uS10</fullName>
    </recommendedName>
    <alternativeName>
        <fullName evidence="2">30S ribosomal protein S10</fullName>
    </alternativeName>
</protein>
<comment type="function">
    <text evidence="1">Involved in the binding of tRNA to the ribosomes.</text>
</comment>
<comment type="subunit">
    <text evidence="1">Part of the 30S ribosomal subunit.</text>
</comment>
<comment type="similarity">
    <text evidence="1">Belongs to the universal ribosomal protein uS10 family.</text>
</comment>
<name>RS10_BURCH</name>
<reference key="1">
    <citation type="submission" date="2006-08" db="EMBL/GenBank/DDBJ databases">
        <title>Complete sequence of chromosome 1 of Burkholderia cenocepacia HI2424.</title>
        <authorList>
            <person name="Copeland A."/>
            <person name="Lucas S."/>
            <person name="Lapidus A."/>
            <person name="Barry K."/>
            <person name="Detter J.C."/>
            <person name="Glavina del Rio T."/>
            <person name="Hammon N."/>
            <person name="Israni S."/>
            <person name="Pitluck S."/>
            <person name="Chain P."/>
            <person name="Malfatti S."/>
            <person name="Shin M."/>
            <person name="Vergez L."/>
            <person name="Schmutz J."/>
            <person name="Larimer F."/>
            <person name="Land M."/>
            <person name="Hauser L."/>
            <person name="Kyrpides N."/>
            <person name="Kim E."/>
            <person name="LiPuma J.J."/>
            <person name="Gonzalez C.F."/>
            <person name="Konstantinidis K."/>
            <person name="Tiedje J.M."/>
            <person name="Richardson P."/>
        </authorList>
    </citation>
    <scope>NUCLEOTIDE SEQUENCE [LARGE SCALE GENOMIC DNA]</scope>
    <source>
        <strain>HI2424</strain>
    </source>
</reference>
<keyword id="KW-0687">Ribonucleoprotein</keyword>
<keyword id="KW-0689">Ribosomal protein</keyword>
<accession>A0K3M4</accession>
<gene>
    <name evidence="1" type="primary">rpsJ</name>
    <name type="ordered locus">Bcen2424_0347</name>
</gene>
<proteinExistence type="inferred from homology"/>
<organism>
    <name type="scientific">Burkholderia cenocepacia (strain HI2424)</name>
    <dbReference type="NCBI Taxonomy" id="331272"/>
    <lineage>
        <taxon>Bacteria</taxon>
        <taxon>Pseudomonadati</taxon>
        <taxon>Pseudomonadota</taxon>
        <taxon>Betaproteobacteria</taxon>
        <taxon>Burkholderiales</taxon>
        <taxon>Burkholderiaceae</taxon>
        <taxon>Burkholderia</taxon>
        <taxon>Burkholderia cepacia complex</taxon>
    </lineage>
</organism>